<feature type="signal peptide" evidence="2">
    <location>
        <begin position="1"/>
        <end position="21"/>
    </location>
</feature>
<feature type="chain" id="PRO_0000020092" description="Olfactomedin-like protein 3">
    <location>
        <begin position="22"/>
        <end position="406"/>
    </location>
</feature>
<feature type="domain" description="Olfactomedin-like" evidence="3">
    <location>
        <begin position="134"/>
        <end position="401"/>
    </location>
</feature>
<feature type="coiled-coil region" evidence="2">
    <location>
        <begin position="25"/>
        <end position="101"/>
    </location>
</feature>
<feature type="glycosylation site" description="N-linked (GlcNAc...) asparagine" evidence="2">
    <location>
        <position position="177"/>
    </location>
</feature>
<feature type="glycosylation site" description="N-linked (GlcNAc...) asparagine" evidence="2">
    <location>
        <position position="248"/>
    </location>
</feature>
<feature type="disulfide bond" evidence="3">
    <location>
        <begin position="135"/>
        <end position="328"/>
    </location>
</feature>
<feature type="splice variant" id="VSP_014128" description="In isoform 2." evidence="6">
    <location>
        <begin position="1"/>
        <end position="20"/>
    </location>
</feature>
<feature type="splice variant" id="VSP_014129" description="In isoform 2." evidence="6">
    <original>GQQHHLVEYMERRLAALE</original>
    <variation>MAQWHCSQRTQAGGHGVG</variation>
    <location>
        <begin position="21"/>
        <end position="38"/>
    </location>
</feature>
<feature type="splice variant" id="VSP_014130" description="In isoform 3." evidence="5">
    <original>DCGYTISQVRSMKILKRFGGPAGLWTKDPLGQTEKIYVLDGTQNDTAFVFPRLRDFTLAMAARKASRVRVPFPWVGTGQLVYGGFLYFARRPPGRPGGGGEMENTLQLIKFHLANRTVVDSSVFPAEGLIPPYGLTADTYIDLAADEEGLWAVY</original>
    <variation>GKQSESRPLTLLRTDILPSLLLTLFFTLSQSIVALSSGICFRETSVMPGLLRRGSGDPGRCGTRSFSILPKIGGNRWANAHYSPDHPPWGSSCWRHLILASISFSCAFLIRLWLHNLSSEINEDSEAIWWPSWSMDQGSTGANREDLRVRWDTE</variation>
    <location>
        <begin position="134"/>
        <end position="287"/>
    </location>
</feature>
<feature type="splice variant" id="VSP_014131" description="In isoform 3." evidence="5">
    <location>
        <begin position="288"/>
        <end position="406"/>
    </location>
</feature>
<feature type="sequence conflict" description="In Ref. 5; BAD96191." evidence="6" ref="5">
    <original>G</original>
    <variation>E</variation>
    <location>
        <position position="118"/>
    </location>
</feature>
<feature type="sequence conflict" description="In Ref. 5; BAD96941." evidence="6" ref="5">
    <original>M</original>
    <variation>K</variation>
    <location>
        <position position="131"/>
    </location>
</feature>
<feature type="sequence conflict" description="In Ref. 5; BAD96191." evidence="6" ref="5">
    <original>V</original>
    <variation>F</variation>
    <location>
        <position position="182"/>
    </location>
</feature>
<feature type="sequence conflict" description="In Ref. 3; AAQ89313." evidence="6" ref="3">
    <original>A</original>
    <variation>V</variation>
    <location>
        <position position="277"/>
    </location>
</feature>
<gene>
    <name type="primary">OLFML3</name>
    <name type="ORF">PSEC0035</name>
    <name type="ORF">PSEC0173</name>
    <name type="ORF">PSEC0244</name>
    <name type="ORF">UNQ663/PRO1294</name>
</gene>
<sequence>MGPSTPLLILFLLSWSGPLQGQQHHLVEYMERRLAALEERLAQCQDQSSRHAAELRDFKNKMLPLLEVAEKEREALRTEADTISGRVDRLEREVDYLETQNPALPCVEFDEKVTGGPGTKGKGRRNEKYDMVTDCGYTISQVRSMKILKRFGGPAGLWTKDPLGQTEKIYVLDGTQNDTAFVFPRLRDFTLAMAARKASRVRVPFPWVGTGQLVYGGFLYFARRPPGRPGGGGEMENTLQLIKFHLANRTVVDSSVFPAEGLIPPYGLTADTYIDLAADEEGLWAVYATREDDRHLCLAKLDPQTLDTEQQWDTPCPRENAEAAFVICGTLYVVYNTRPASRARIQCSFDASGTLTPERAALPYFPRRYGAHASLRYNPRERQLYAWDDGYQIVYKLEMRKKEEEV</sequence>
<name>OLFL3_HUMAN</name>
<comment type="function">
    <text evidence="1 4">Secreted scaffold protein that plays an essential role in dorsoventral patterning during early development. Stabilizes axial formation by restricting chordin (CHRD) activity on the dorsal side. Acts by facilitating the association between the tolloid proteases and their substrate chordin (CHRD), leading to enhance chordin (CHRD) degradation (By similarity). May have matrix-related function involved in placental and embryonic development, or play a similar role in other physiological processes.</text>
</comment>
<comment type="subcellular location">
    <subcellularLocation>
        <location evidence="4">Secreted</location>
    </subcellularLocation>
</comment>
<comment type="alternative products">
    <event type="alternative splicing"/>
    <isoform>
        <id>Q9NRN5-1</id>
        <name>1</name>
        <sequence type="displayed"/>
    </isoform>
    <isoform>
        <id>Q9NRN5-2</id>
        <name>2</name>
        <sequence type="described" ref="VSP_014128 VSP_014129"/>
    </isoform>
    <isoform>
        <id>Q9NRN5-3</id>
        <name>3</name>
        <sequence type="described" ref="VSP_014130 VSP_014131"/>
    </isoform>
</comment>
<comment type="tissue specificity">
    <text evidence="4">Abundant in placenta, moderate in liver and heart, whereas fairly weak in other tissues examined. On term placenta, mainly localized extracellularly surrounding the syncytiotrophoblastic cells and very rarely expressed in the maternal decidua layer.</text>
</comment>
<comment type="similarity">
    <text evidence="6">Belongs to the OLFML3 family.</text>
</comment>
<evidence type="ECO:0000250" key="1"/>
<evidence type="ECO:0000255" key="2"/>
<evidence type="ECO:0000255" key="3">
    <source>
        <dbReference type="PROSITE-ProRule" id="PRU00446"/>
    </source>
</evidence>
<evidence type="ECO:0000269" key="4">
    <source>
    </source>
</evidence>
<evidence type="ECO:0000303" key="5">
    <source>
    </source>
</evidence>
<evidence type="ECO:0000305" key="6"/>
<dbReference type="EMBL" id="AY464015">
    <property type="protein sequence ID" value="AAR88262.1"/>
    <property type="molecule type" value="mRNA"/>
</dbReference>
<dbReference type="EMBL" id="AF201945">
    <property type="protein sequence ID" value="AAF86881.1"/>
    <property type="molecule type" value="mRNA"/>
</dbReference>
<dbReference type="EMBL" id="AY358954">
    <property type="protein sequence ID" value="AAQ89313.1"/>
    <property type="molecule type" value="mRNA"/>
</dbReference>
<dbReference type="EMBL" id="AK075544">
    <property type="protein sequence ID" value="BAC11687.1"/>
    <property type="molecule type" value="mRNA"/>
</dbReference>
<dbReference type="EMBL" id="AK223221">
    <property type="protein sequence ID" value="BAD96941.1"/>
    <property type="molecule type" value="mRNA"/>
</dbReference>
<dbReference type="EMBL" id="AK222471">
    <property type="protein sequence ID" value="BAD96191.1"/>
    <property type="molecule type" value="mRNA"/>
</dbReference>
<dbReference type="EMBL" id="AK075353">
    <property type="protein sequence ID" value="BAC11564.1"/>
    <property type="molecule type" value="mRNA"/>
</dbReference>
<dbReference type="EMBL" id="AK075479">
    <property type="protein sequence ID" value="BAC11644.1"/>
    <property type="molecule type" value="mRNA"/>
</dbReference>
<dbReference type="EMBL" id="AL731797">
    <property type="status" value="NOT_ANNOTATED_CDS"/>
    <property type="molecule type" value="Genomic_DNA"/>
</dbReference>
<dbReference type="EMBL" id="BC009920">
    <property type="protein sequence ID" value="AAH09920.1"/>
    <property type="molecule type" value="mRNA"/>
</dbReference>
<dbReference type="CCDS" id="CCDS65618.1">
    <molecule id="Q9NRN5-2"/>
</dbReference>
<dbReference type="CCDS" id="CCDS870.1">
    <molecule id="Q9NRN5-1"/>
</dbReference>
<dbReference type="RefSeq" id="NP_001273281.1">
    <molecule id="Q9NRN5-2"/>
    <property type="nucleotide sequence ID" value="NM_001286352.3"/>
</dbReference>
<dbReference type="RefSeq" id="NP_064575.1">
    <molecule id="Q9NRN5-1"/>
    <property type="nucleotide sequence ID" value="NM_020190.5"/>
</dbReference>
<dbReference type="RefSeq" id="XP_016857337.1">
    <molecule id="Q9NRN5-2"/>
    <property type="nucleotide sequence ID" value="XM_017001848.3"/>
</dbReference>
<dbReference type="RefSeq" id="XP_054193730.1">
    <molecule id="Q9NRN5-2"/>
    <property type="nucleotide sequence ID" value="XM_054337755.1"/>
</dbReference>
<dbReference type="SMR" id="Q9NRN5"/>
<dbReference type="BioGRID" id="121268">
    <property type="interactions" value="13"/>
</dbReference>
<dbReference type="FunCoup" id="Q9NRN5">
    <property type="interactions" value="93"/>
</dbReference>
<dbReference type="IntAct" id="Q9NRN5">
    <property type="interactions" value="9"/>
</dbReference>
<dbReference type="MINT" id="Q9NRN5"/>
<dbReference type="STRING" id="9606.ENSP00000322273"/>
<dbReference type="GlyConnect" id="1587">
    <property type="glycosylation" value="52 N-Linked glycans (2 sites)"/>
</dbReference>
<dbReference type="GlyCosmos" id="Q9NRN5">
    <property type="glycosylation" value="2 sites, 55 glycans"/>
</dbReference>
<dbReference type="GlyGen" id="Q9NRN5">
    <property type="glycosylation" value="3 sites, 104 N-linked glycans (2 sites), 1 O-linked glycan (1 site)"/>
</dbReference>
<dbReference type="iPTMnet" id="Q9NRN5"/>
<dbReference type="PhosphoSitePlus" id="Q9NRN5"/>
<dbReference type="BioMuta" id="OLFML3"/>
<dbReference type="DMDM" id="37999795"/>
<dbReference type="jPOST" id="Q9NRN5"/>
<dbReference type="MassIVE" id="Q9NRN5"/>
<dbReference type="PaxDb" id="9606-ENSP00000322273"/>
<dbReference type="PeptideAtlas" id="Q9NRN5"/>
<dbReference type="ProteomicsDB" id="82393">
    <molecule id="Q9NRN5-1"/>
</dbReference>
<dbReference type="ProteomicsDB" id="82394">
    <molecule id="Q9NRN5-2"/>
</dbReference>
<dbReference type="ProteomicsDB" id="82395">
    <molecule id="Q9NRN5-3"/>
</dbReference>
<dbReference type="ABCD" id="Q9NRN5">
    <property type="antibodies" value="3 sequenced antibodies"/>
</dbReference>
<dbReference type="Antibodypedia" id="53757">
    <property type="antibodies" value="75 antibodies from 20 providers"/>
</dbReference>
<dbReference type="DNASU" id="56944"/>
<dbReference type="Ensembl" id="ENST00000320334.5">
    <molecule id="Q9NRN5-1"/>
    <property type="protein sequence ID" value="ENSP00000322273.4"/>
    <property type="gene ID" value="ENSG00000116774.12"/>
</dbReference>
<dbReference type="Ensembl" id="ENST00000369551.5">
    <molecule id="Q9NRN5-2"/>
    <property type="protein sequence ID" value="ENSP00000358564.1"/>
    <property type="gene ID" value="ENSG00000116774.12"/>
</dbReference>
<dbReference type="GeneID" id="56944"/>
<dbReference type="KEGG" id="hsa:56944"/>
<dbReference type="MANE-Select" id="ENST00000320334.5">
    <property type="protein sequence ID" value="ENSP00000322273.4"/>
    <property type="RefSeq nucleotide sequence ID" value="NM_020190.5"/>
    <property type="RefSeq protein sequence ID" value="NP_064575.1"/>
</dbReference>
<dbReference type="UCSC" id="uc001eer.3">
    <molecule id="Q9NRN5-1"/>
    <property type="organism name" value="human"/>
</dbReference>
<dbReference type="AGR" id="HGNC:24956"/>
<dbReference type="CTD" id="56944"/>
<dbReference type="DisGeNET" id="56944"/>
<dbReference type="GeneCards" id="OLFML3"/>
<dbReference type="HGNC" id="HGNC:24956">
    <property type="gene designation" value="OLFML3"/>
</dbReference>
<dbReference type="HPA" id="ENSG00000116774">
    <property type="expression patterns" value="Tissue enhanced (ovary)"/>
</dbReference>
<dbReference type="MIM" id="610088">
    <property type="type" value="gene"/>
</dbReference>
<dbReference type="neXtProt" id="NX_Q9NRN5"/>
<dbReference type="OpenTargets" id="ENSG00000116774"/>
<dbReference type="PharmGKB" id="PA134913777"/>
<dbReference type="VEuPathDB" id="HostDB:ENSG00000116774"/>
<dbReference type="eggNOG" id="KOG3545">
    <property type="taxonomic scope" value="Eukaryota"/>
</dbReference>
<dbReference type="GeneTree" id="ENSGT00940000158083"/>
<dbReference type="InParanoid" id="Q9NRN5"/>
<dbReference type="OMA" id="QQQFMEY"/>
<dbReference type="OrthoDB" id="8626508at2759"/>
<dbReference type="PAN-GO" id="Q9NRN5">
    <property type="GO annotations" value="2 GO annotations based on evolutionary models"/>
</dbReference>
<dbReference type="PhylomeDB" id="Q9NRN5"/>
<dbReference type="TreeFam" id="TF352000"/>
<dbReference type="PathwayCommons" id="Q9NRN5"/>
<dbReference type="SignaLink" id="Q9NRN5"/>
<dbReference type="BioGRID-ORCS" id="56944">
    <property type="hits" value="243 hits in 1142 CRISPR screens"/>
</dbReference>
<dbReference type="ChiTaRS" id="OLFML3">
    <property type="organism name" value="human"/>
</dbReference>
<dbReference type="GeneWiki" id="OLFML3"/>
<dbReference type="GenomeRNAi" id="56944"/>
<dbReference type="Pharos" id="Q9NRN5">
    <property type="development level" value="Tbio"/>
</dbReference>
<dbReference type="PRO" id="PR:Q9NRN5"/>
<dbReference type="Proteomes" id="UP000005640">
    <property type="component" value="Chromosome 1"/>
</dbReference>
<dbReference type="RNAct" id="Q9NRN5">
    <property type="molecule type" value="protein"/>
</dbReference>
<dbReference type="Bgee" id="ENSG00000116774">
    <property type="expression patterns" value="Expressed in gall bladder and 102 other cell types or tissues"/>
</dbReference>
<dbReference type="ExpressionAtlas" id="Q9NRN5">
    <property type="expression patterns" value="baseline and differential"/>
</dbReference>
<dbReference type="GO" id="GO:0005615">
    <property type="term" value="C:extracellular space"/>
    <property type="evidence" value="ECO:0000318"/>
    <property type="project" value="GO_Central"/>
</dbReference>
<dbReference type="GO" id="GO:1903561">
    <property type="term" value="C:extracellular vesicle"/>
    <property type="evidence" value="ECO:0007005"/>
    <property type="project" value="UniProtKB"/>
</dbReference>
<dbReference type="GO" id="GO:0007165">
    <property type="term" value="P:signal transduction"/>
    <property type="evidence" value="ECO:0000318"/>
    <property type="project" value="GO_Central"/>
</dbReference>
<dbReference type="InterPro" id="IPR003112">
    <property type="entry name" value="Olfac-like_dom"/>
</dbReference>
<dbReference type="InterPro" id="IPR050605">
    <property type="entry name" value="Olfactomedin-like_domain"/>
</dbReference>
<dbReference type="PANTHER" id="PTHR23192:SF8">
    <property type="entry name" value="OLFACTOMEDIN-LIKE PROTEIN 3"/>
    <property type="match status" value="1"/>
</dbReference>
<dbReference type="PANTHER" id="PTHR23192">
    <property type="entry name" value="OLFACTOMEDIN-RELATED"/>
    <property type="match status" value="1"/>
</dbReference>
<dbReference type="Pfam" id="PF02191">
    <property type="entry name" value="OLF"/>
    <property type="match status" value="1"/>
</dbReference>
<dbReference type="SMART" id="SM00284">
    <property type="entry name" value="OLF"/>
    <property type="match status" value="1"/>
</dbReference>
<dbReference type="PROSITE" id="PS51132">
    <property type="entry name" value="OLF"/>
    <property type="match status" value="1"/>
</dbReference>
<organism>
    <name type="scientific">Homo sapiens</name>
    <name type="common">Human</name>
    <dbReference type="NCBI Taxonomy" id="9606"/>
    <lineage>
        <taxon>Eukaryota</taxon>
        <taxon>Metazoa</taxon>
        <taxon>Chordata</taxon>
        <taxon>Craniata</taxon>
        <taxon>Vertebrata</taxon>
        <taxon>Euteleostomi</taxon>
        <taxon>Mammalia</taxon>
        <taxon>Eutheria</taxon>
        <taxon>Euarchontoglires</taxon>
        <taxon>Primates</taxon>
        <taxon>Haplorrhini</taxon>
        <taxon>Catarrhini</taxon>
        <taxon>Hominidae</taxon>
        <taxon>Homo</taxon>
    </lineage>
</organism>
<protein>
    <recommendedName>
        <fullName>Olfactomedin-like protein 3</fullName>
    </recommendedName>
    <alternativeName>
        <fullName>HNOEL-iso</fullName>
    </alternativeName>
    <alternativeName>
        <fullName>hOLF44</fullName>
    </alternativeName>
</protein>
<reference key="1">
    <citation type="journal article" date="2004" name="FEBS Lett.">
        <title>hOLF44, a secreted glycoprotein with distinct expression pattern, belongs to an uncharacterized olfactomedin-like subfamily newly identified by phylogenetic analysis.</title>
        <authorList>
            <person name="Zeng L.-C."/>
            <person name="Liu F."/>
            <person name="Zhang X."/>
            <person name="Zhu Z.-D."/>
            <person name="Wang Z.-Q."/>
            <person name="Han Z.-G."/>
            <person name="Ma W.-J."/>
        </authorList>
    </citation>
    <scope>NUCLEOTIDE SEQUENCE [MRNA] (ISOFORM 1)</scope>
    <scope>SUBCELLULAR LOCATION</scope>
    <scope>TISSUE SPECIFICITY</scope>
    <scope>FUNCTION</scope>
</reference>
<reference key="2">
    <citation type="submission" date="1999-11" db="EMBL/GenBank/DDBJ databases">
        <title>Novel genes expressed in human dendritic cells.</title>
        <authorList>
            <person name="Huang C."/>
            <person name="Ren S."/>
            <person name="Tu Y."/>
            <person name="Gu W."/>
            <person name="Wang Y."/>
            <person name="Han Z."/>
            <person name="Chen Z."/>
        </authorList>
    </citation>
    <scope>NUCLEOTIDE SEQUENCE [LARGE SCALE MRNA] (ISOFORM 1)</scope>
    <source>
        <tissue>Dendritic cell</tissue>
    </source>
</reference>
<reference key="3">
    <citation type="journal article" date="2003" name="Genome Res.">
        <title>The secreted protein discovery initiative (SPDI), a large-scale effort to identify novel human secreted and transmembrane proteins: a bioinformatics assessment.</title>
        <authorList>
            <person name="Clark H.F."/>
            <person name="Gurney A.L."/>
            <person name="Abaya E."/>
            <person name="Baker K."/>
            <person name="Baldwin D.T."/>
            <person name="Brush J."/>
            <person name="Chen J."/>
            <person name="Chow B."/>
            <person name="Chui C."/>
            <person name="Crowley C."/>
            <person name="Currell B."/>
            <person name="Deuel B."/>
            <person name="Dowd P."/>
            <person name="Eaton D."/>
            <person name="Foster J.S."/>
            <person name="Grimaldi C."/>
            <person name="Gu Q."/>
            <person name="Hass P.E."/>
            <person name="Heldens S."/>
            <person name="Huang A."/>
            <person name="Kim H.S."/>
            <person name="Klimowski L."/>
            <person name="Jin Y."/>
            <person name="Johnson S."/>
            <person name="Lee J."/>
            <person name="Lewis L."/>
            <person name="Liao D."/>
            <person name="Mark M.R."/>
            <person name="Robbie E."/>
            <person name="Sanchez C."/>
            <person name="Schoenfeld J."/>
            <person name="Seshagiri S."/>
            <person name="Simmons L."/>
            <person name="Singh J."/>
            <person name="Smith V."/>
            <person name="Stinson J."/>
            <person name="Vagts A."/>
            <person name="Vandlen R.L."/>
            <person name="Watanabe C."/>
            <person name="Wieand D."/>
            <person name="Woods K."/>
            <person name="Xie M.-H."/>
            <person name="Yansura D.G."/>
            <person name="Yi S."/>
            <person name="Yu G."/>
            <person name="Yuan J."/>
            <person name="Zhang M."/>
            <person name="Zhang Z."/>
            <person name="Goddard A.D."/>
            <person name="Wood W.I."/>
            <person name="Godowski P.J."/>
            <person name="Gray A.M."/>
        </authorList>
    </citation>
    <scope>NUCLEOTIDE SEQUENCE [LARGE SCALE MRNA] (ISOFORM 1)</scope>
</reference>
<reference key="4">
    <citation type="journal article" date="2004" name="Nat. Genet.">
        <title>Complete sequencing and characterization of 21,243 full-length human cDNAs.</title>
        <authorList>
            <person name="Ota T."/>
            <person name="Suzuki Y."/>
            <person name="Nishikawa T."/>
            <person name="Otsuki T."/>
            <person name="Sugiyama T."/>
            <person name="Irie R."/>
            <person name="Wakamatsu A."/>
            <person name="Hayashi K."/>
            <person name="Sato H."/>
            <person name="Nagai K."/>
            <person name="Kimura K."/>
            <person name="Makita H."/>
            <person name="Sekine M."/>
            <person name="Obayashi M."/>
            <person name="Nishi T."/>
            <person name="Shibahara T."/>
            <person name="Tanaka T."/>
            <person name="Ishii S."/>
            <person name="Yamamoto J."/>
            <person name="Saito K."/>
            <person name="Kawai Y."/>
            <person name="Isono Y."/>
            <person name="Nakamura Y."/>
            <person name="Nagahari K."/>
            <person name="Murakami K."/>
            <person name="Yasuda T."/>
            <person name="Iwayanagi T."/>
            <person name="Wagatsuma M."/>
            <person name="Shiratori A."/>
            <person name="Sudo H."/>
            <person name="Hosoiri T."/>
            <person name="Kaku Y."/>
            <person name="Kodaira H."/>
            <person name="Kondo H."/>
            <person name="Sugawara M."/>
            <person name="Takahashi M."/>
            <person name="Kanda K."/>
            <person name="Yokoi T."/>
            <person name="Furuya T."/>
            <person name="Kikkawa E."/>
            <person name="Omura Y."/>
            <person name="Abe K."/>
            <person name="Kamihara K."/>
            <person name="Katsuta N."/>
            <person name="Sato K."/>
            <person name="Tanikawa M."/>
            <person name="Yamazaki M."/>
            <person name="Ninomiya K."/>
            <person name="Ishibashi T."/>
            <person name="Yamashita H."/>
            <person name="Murakawa K."/>
            <person name="Fujimori K."/>
            <person name="Tanai H."/>
            <person name="Kimata M."/>
            <person name="Watanabe M."/>
            <person name="Hiraoka S."/>
            <person name="Chiba Y."/>
            <person name="Ishida S."/>
            <person name="Ono Y."/>
            <person name="Takiguchi S."/>
            <person name="Watanabe S."/>
            <person name="Yosida M."/>
            <person name="Hotuta T."/>
            <person name="Kusano J."/>
            <person name="Kanehori K."/>
            <person name="Takahashi-Fujii A."/>
            <person name="Hara H."/>
            <person name="Tanase T.-O."/>
            <person name="Nomura Y."/>
            <person name="Togiya S."/>
            <person name="Komai F."/>
            <person name="Hara R."/>
            <person name="Takeuchi K."/>
            <person name="Arita M."/>
            <person name="Imose N."/>
            <person name="Musashino K."/>
            <person name="Yuuki H."/>
            <person name="Oshima A."/>
            <person name="Sasaki N."/>
            <person name="Aotsuka S."/>
            <person name="Yoshikawa Y."/>
            <person name="Matsunawa H."/>
            <person name="Ichihara T."/>
            <person name="Shiohata N."/>
            <person name="Sano S."/>
            <person name="Moriya S."/>
            <person name="Momiyama H."/>
            <person name="Satoh N."/>
            <person name="Takami S."/>
            <person name="Terashima Y."/>
            <person name="Suzuki O."/>
            <person name="Nakagawa S."/>
            <person name="Senoh A."/>
            <person name="Mizoguchi H."/>
            <person name="Goto Y."/>
            <person name="Shimizu F."/>
            <person name="Wakebe H."/>
            <person name="Hishigaki H."/>
            <person name="Watanabe T."/>
            <person name="Sugiyama A."/>
            <person name="Takemoto M."/>
            <person name="Kawakami B."/>
            <person name="Yamazaki M."/>
            <person name="Watanabe K."/>
            <person name="Kumagai A."/>
            <person name="Itakura S."/>
            <person name="Fukuzumi Y."/>
            <person name="Fujimori Y."/>
            <person name="Komiyama M."/>
            <person name="Tashiro H."/>
            <person name="Tanigami A."/>
            <person name="Fujiwara T."/>
            <person name="Ono T."/>
            <person name="Yamada K."/>
            <person name="Fujii Y."/>
            <person name="Ozaki K."/>
            <person name="Hirao M."/>
            <person name="Ohmori Y."/>
            <person name="Kawabata A."/>
            <person name="Hikiji T."/>
            <person name="Kobatake N."/>
            <person name="Inagaki H."/>
            <person name="Ikema Y."/>
            <person name="Okamoto S."/>
            <person name="Okitani R."/>
            <person name="Kawakami T."/>
            <person name="Noguchi S."/>
            <person name="Itoh T."/>
            <person name="Shigeta K."/>
            <person name="Senba T."/>
            <person name="Matsumura K."/>
            <person name="Nakajima Y."/>
            <person name="Mizuno T."/>
            <person name="Morinaga M."/>
            <person name="Sasaki M."/>
            <person name="Togashi T."/>
            <person name="Oyama M."/>
            <person name="Hata H."/>
            <person name="Watanabe M."/>
            <person name="Komatsu T."/>
            <person name="Mizushima-Sugano J."/>
            <person name="Satoh T."/>
            <person name="Shirai Y."/>
            <person name="Takahashi Y."/>
            <person name="Nakagawa K."/>
            <person name="Okumura K."/>
            <person name="Nagase T."/>
            <person name="Nomura N."/>
            <person name="Kikuchi H."/>
            <person name="Masuho Y."/>
            <person name="Yamashita R."/>
            <person name="Nakai K."/>
            <person name="Yada T."/>
            <person name="Nakamura Y."/>
            <person name="Ohara O."/>
            <person name="Isogai T."/>
            <person name="Sugano S."/>
        </authorList>
    </citation>
    <scope>NUCLEOTIDE SEQUENCE [LARGE SCALE MRNA] (ISOFORM 3)</scope>
</reference>
<reference key="5">
    <citation type="submission" date="2005-04" db="EMBL/GenBank/DDBJ databases">
        <authorList>
            <person name="Suzuki Y."/>
            <person name="Sugano S."/>
            <person name="Totoki Y."/>
            <person name="Toyoda A."/>
            <person name="Takeda T."/>
            <person name="Sakaki Y."/>
            <person name="Tanaka A."/>
            <person name="Yokoyama S."/>
        </authorList>
    </citation>
    <scope>NUCLEOTIDE SEQUENCE [LARGE SCALE MRNA] (ISOFORM 1)</scope>
    <source>
        <tissue>Adipose tissue</tissue>
        <tissue>Gastric mucosa</tissue>
    </source>
</reference>
<reference key="6">
    <citation type="journal article" date="2005" name="DNA Res.">
        <title>Signal sequence and keyword trap in silico for selection of full-length human cDNAs encoding secretion or membrane proteins from oligo-capped cDNA libraries.</title>
        <authorList>
            <person name="Otsuki T."/>
            <person name="Ota T."/>
            <person name="Nishikawa T."/>
            <person name="Hayashi K."/>
            <person name="Suzuki Y."/>
            <person name="Yamamoto J."/>
            <person name="Wakamatsu A."/>
            <person name="Kimura K."/>
            <person name="Sakamoto K."/>
            <person name="Hatano N."/>
            <person name="Kawai Y."/>
            <person name="Ishii S."/>
            <person name="Saito K."/>
            <person name="Kojima S."/>
            <person name="Sugiyama T."/>
            <person name="Ono T."/>
            <person name="Okano K."/>
            <person name="Yoshikawa Y."/>
            <person name="Aotsuka S."/>
            <person name="Sasaki N."/>
            <person name="Hattori A."/>
            <person name="Okumura K."/>
            <person name="Nagai K."/>
            <person name="Sugano S."/>
            <person name="Isogai T."/>
        </authorList>
    </citation>
    <scope>NUCLEOTIDE SEQUENCE [LARGE SCALE MRNA] (ISOFORM 1)</scope>
    <source>
        <tissue>Teratocarcinoma</tissue>
    </source>
</reference>
<reference key="7">
    <citation type="journal article" date="2006" name="Nature">
        <title>The DNA sequence and biological annotation of human chromosome 1.</title>
        <authorList>
            <person name="Gregory S.G."/>
            <person name="Barlow K.F."/>
            <person name="McLay K.E."/>
            <person name="Kaul R."/>
            <person name="Swarbreck D."/>
            <person name="Dunham A."/>
            <person name="Scott C.E."/>
            <person name="Howe K.L."/>
            <person name="Woodfine K."/>
            <person name="Spencer C.C.A."/>
            <person name="Jones M.C."/>
            <person name="Gillson C."/>
            <person name="Searle S."/>
            <person name="Zhou Y."/>
            <person name="Kokocinski F."/>
            <person name="McDonald L."/>
            <person name="Evans R."/>
            <person name="Phillips K."/>
            <person name="Atkinson A."/>
            <person name="Cooper R."/>
            <person name="Jones C."/>
            <person name="Hall R.E."/>
            <person name="Andrews T.D."/>
            <person name="Lloyd C."/>
            <person name="Ainscough R."/>
            <person name="Almeida J.P."/>
            <person name="Ambrose K.D."/>
            <person name="Anderson F."/>
            <person name="Andrew R.W."/>
            <person name="Ashwell R.I.S."/>
            <person name="Aubin K."/>
            <person name="Babbage A.K."/>
            <person name="Bagguley C.L."/>
            <person name="Bailey J."/>
            <person name="Beasley H."/>
            <person name="Bethel G."/>
            <person name="Bird C.P."/>
            <person name="Bray-Allen S."/>
            <person name="Brown J.Y."/>
            <person name="Brown A.J."/>
            <person name="Buckley D."/>
            <person name="Burton J."/>
            <person name="Bye J."/>
            <person name="Carder C."/>
            <person name="Chapman J.C."/>
            <person name="Clark S.Y."/>
            <person name="Clarke G."/>
            <person name="Clee C."/>
            <person name="Cobley V."/>
            <person name="Collier R.E."/>
            <person name="Corby N."/>
            <person name="Coville G.J."/>
            <person name="Davies J."/>
            <person name="Deadman R."/>
            <person name="Dunn M."/>
            <person name="Earthrowl M."/>
            <person name="Ellington A.G."/>
            <person name="Errington H."/>
            <person name="Frankish A."/>
            <person name="Frankland J."/>
            <person name="French L."/>
            <person name="Garner P."/>
            <person name="Garnett J."/>
            <person name="Gay L."/>
            <person name="Ghori M.R.J."/>
            <person name="Gibson R."/>
            <person name="Gilby L.M."/>
            <person name="Gillett W."/>
            <person name="Glithero R.J."/>
            <person name="Grafham D.V."/>
            <person name="Griffiths C."/>
            <person name="Griffiths-Jones S."/>
            <person name="Grocock R."/>
            <person name="Hammond S."/>
            <person name="Harrison E.S.I."/>
            <person name="Hart E."/>
            <person name="Haugen E."/>
            <person name="Heath P.D."/>
            <person name="Holmes S."/>
            <person name="Holt K."/>
            <person name="Howden P.J."/>
            <person name="Hunt A.R."/>
            <person name="Hunt S.E."/>
            <person name="Hunter G."/>
            <person name="Isherwood J."/>
            <person name="James R."/>
            <person name="Johnson C."/>
            <person name="Johnson D."/>
            <person name="Joy A."/>
            <person name="Kay M."/>
            <person name="Kershaw J.K."/>
            <person name="Kibukawa M."/>
            <person name="Kimberley A.M."/>
            <person name="King A."/>
            <person name="Knights A.J."/>
            <person name="Lad H."/>
            <person name="Laird G."/>
            <person name="Lawlor S."/>
            <person name="Leongamornlert D.A."/>
            <person name="Lloyd D.M."/>
            <person name="Loveland J."/>
            <person name="Lovell J."/>
            <person name="Lush M.J."/>
            <person name="Lyne R."/>
            <person name="Martin S."/>
            <person name="Mashreghi-Mohammadi M."/>
            <person name="Matthews L."/>
            <person name="Matthews N.S.W."/>
            <person name="McLaren S."/>
            <person name="Milne S."/>
            <person name="Mistry S."/>
            <person name="Moore M.J.F."/>
            <person name="Nickerson T."/>
            <person name="O'Dell C.N."/>
            <person name="Oliver K."/>
            <person name="Palmeiri A."/>
            <person name="Palmer S.A."/>
            <person name="Parker A."/>
            <person name="Patel D."/>
            <person name="Pearce A.V."/>
            <person name="Peck A.I."/>
            <person name="Pelan S."/>
            <person name="Phelps K."/>
            <person name="Phillimore B.J."/>
            <person name="Plumb R."/>
            <person name="Rajan J."/>
            <person name="Raymond C."/>
            <person name="Rouse G."/>
            <person name="Saenphimmachak C."/>
            <person name="Sehra H.K."/>
            <person name="Sheridan E."/>
            <person name="Shownkeen R."/>
            <person name="Sims S."/>
            <person name="Skuce C.D."/>
            <person name="Smith M."/>
            <person name="Steward C."/>
            <person name="Subramanian S."/>
            <person name="Sycamore N."/>
            <person name="Tracey A."/>
            <person name="Tromans A."/>
            <person name="Van Helmond Z."/>
            <person name="Wall M."/>
            <person name="Wallis J.M."/>
            <person name="White S."/>
            <person name="Whitehead S.L."/>
            <person name="Wilkinson J.E."/>
            <person name="Willey D.L."/>
            <person name="Williams H."/>
            <person name="Wilming L."/>
            <person name="Wray P.W."/>
            <person name="Wu Z."/>
            <person name="Coulson A."/>
            <person name="Vaudin M."/>
            <person name="Sulston J.E."/>
            <person name="Durbin R.M."/>
            <person name="Hubbard T."/>
            <person name="Wooster R."/>
            <person name="Dunham I."/>
            <person name="Carter N.P."/>
            <person name="McVean G."/>
            <person name="Ross M.T."/>
            <person name="Harrow J."/>
            <person name="Olson M.V."/>
            <person name="Beck S."/>
            <person name="Rogers J."/>
            <person name="Bentley D.R."/>
        </authorList>
    </citation>
    <scope>NUCLEOTIDE SEQUENCE [LARGE SCALE GENOMIC DNA]</scope>
</reference>
<reference key="8">
    <citation type="journal article" date="2004" name="Genome Res.">
        <title>The status, quality, and expansion of the NIH full-length cDNA project: the Mammalian Gene Collection (MGC).</title>
        <authorList>
            <consortium name="The MGC Project Team"/>
        </authorList>
    </citation>
    <scope>NUCLEOTIDE SEQUENCE [LARGE SCALE MRNA] (ISOFORM 1)</scope>
    <source>
        <tissue>Muscle</tissue>
    </source>
</reference>
<proteinExistence type="evidence at protein level"/>
<accession>Q9NRN5</accession>
<accession>Q53FR1</accession>
<accession>Q53HV9</accession>
<accession>Q5SQL6</accession>
<accession>Q69AX9</accession>
<accession>Q8NBJ2</accession>
<keyword id="KW-0025">Alternative splicing</keyword>
<keyword id="KW-0175">Coiled coil</keyword>
<keyword id="KW-0217">Developmental protein</keyword>
<keyword id="KW-1015">Disulfide bond</keyword>
<keyword id="KW-0325">Glycoprotein</keyword>
<keyword id="KW-1267">Proteomics identification</keyword>
<keyword id="KW-1185">Reference proteome</keyword>
<keyword id="KW-0964">Secreted</keyword>
<keyword id="KW-0732">Signal</keyword>